<name>AMTB_ECOLI</name>
<evidence type="ECO:0000269" key="1">
    <source>
    </source>
</evidence>
<evidence type="ECO:0000269" key="2">
    <source>
    </source>
</evidence>
<evidence type="ECO:0000269" key="3">
    <source>
    </source>
</evidence>
<evidence type="ECO:0000269" key="4">
    <source>
    </source>
</evidence>
<evidence type="ECO:0000269" key="5">
    <source>
    </source>
</evidence>
<evidence type="ECO:0000269" key="6">
    <source>
    </source>
</evidence>
<evidence type="ECO:0000269" key="7">
    <source>
    </source>
</evidence>
<evidence type="ECO:0000269" key="8">
    <source>
    </source>
</evidence>
<evidence type="ECO:0000269" key="9">
    <source>
    </source>
</evidence>
<evidence type="ECO:0000269" key="10">
    <source>
    </source>
</evidence>
<evidence type="ECO:0000269" key="11">
    <source>
    </source>
</evidence>
<evidence type="ECO:0000269" key="12">
    <source>
    </source>
</evidence>
<evidence type="ECO:0000269" key="13">
    <source>
    </source>
</evidence>
<evidence type="ECO:0000269" key="14">
    <source>
    </source>
</evidence>
<evidence type="ECO:0000269" key="15">
    <source>
    </source>
</evidence>
<evidence type="ECO:0000269" key="16">
    <source>
    </source>
</evidence>
<evidence type="ECO:0000269" key="17">
    <source>
    </source>
</evidence>
<evidence type="ECO:0000269" key="18">
    <source>
    </source>
</evidence>
<evidence type="ECO:0000269" key="19">
    <source>
    </source>
</evidence>
<evidence type="ECO:0000269" key="20">
    <source>
    </source>
</evidence>
<evidence type="ECO:0000269" key="21">
    <source>
    </source>
</evidence>
<evidence type="ECO:0000269" key="22">
    <source>
    </source>
</evidence>
<evidence type="ECO:0000269" key="23">
    <source>
    </source>
</evidence>
<evidence type="ECO:0000303" key="24">
    <source>
    </source>
</evidence>
<evidence type="ECO:0000303" key="25">
    <source>
    </source>
</evidence>
<evidence type="ECO:0000303" key="26">
    <source>
    </source>
</evidence>
<evidence type="ECO:0000303" key="27">
    <source>
    </source>
</evidence>
<evidence type="ECO:0000303" key="28">
    <source>
    </source>
</evidence>
<evidence type="ECO:0000303" key="29">
    <source>
    </source>
</evidence>
<evidence type="ECO:0000305" key="30"/>
<evidence type="ECO:0000305" key="31">
    <source>
    </source>
</evidence>
<evidence type="ECO:0000305" key="32">
    <source>
    </source>
</evidence>
<evidence type="ECO:0000305" key="33">
    <source>
    </source>
</evidence>
<evidence type="ECO:0000305" key="34">
    <source>
    </source>
</evidence>
<evidence type="ECO:0000305" key="35">
    <source>
    </source>
</evidence>
<evidence type="ECO:0007744" key="36">
    <source>
        <dbReference type="PDB" id="1U77"/>
    </source>
</evidence>
<evidence type="ECO:0007744" key="37">
    <source>
        <dbReference type="PDB" id="1U7C"/>
    </source>
</evidence>
<evidence type="ECO:0007744" key="38">
    <source>
        <dbReference type="PDB" id="1U7G"/>
    </source>
</evidence>
<evidence type="ECO:0007744" key="39">
    <source>
        <dbReference type="PDB" id="1XQE"/>
    </source>
</evidence>
<evidence type="ECO:0007744" key="40">
    <source>
        <dbReference type="PDB" id="1XQF"/>
    </source>
</evidence>
<evidence type="ECO:0007744" key="41">
    <source>
        <dbReference type="PDB" id="2NMR"/>
    </source>
</evidence>
<evidence type="ECO:0007744" key="42">
    <source>
        <dbReference type="PDB" id="2NOP"/>
    </source>
</evidence>
<evidence type="ECO:0007744" key="43">
    <source>
        <dbReference type="PDB" id="2NOW"/>
    </source>
</evidence>
<evidence type="ECO:0007744" key="44">
    <source>
        <dbReference type="PDB" id="2NPC"/>
    </source>
</evidence>
<evidence type="ECO:0007744" key="45">
    <source>
        <dbReference type="PDB" id="2NPD"/>
    </source>
</evidence>
<evidence type="ECO:0007744" key="46">
    <source>
        <dbReference type="PDB" id="2NPE"/>
    </source>
</evidence>
<evidence type="ECO:0007744" key="47">
    <source>
        <dbReference type="PDB" id="2NPG"/>
    </source>
</evidence>
<evidence type="ECO:0007744" key="48">
    <source>
        <dbReference type="PDB" id="2NPJ"/>
    </source>
</evidence>
<evidence type="ECO:0007744" key="49">
    <source>
        <dbReference type="PDB" id="2NPK"/>
    </source>
</evidence>
<evidence type="ECO:0007744" key="50">
    <source>
        <dbReference type="PDB" id="2NS1"/>
    </source>
</evidence>
<evidence type="ECO:0007744" key="51">
    <source>
        <dbReference type="PDB" id="2NUU"/>
    </source>
</evidence>
<evidence type="ECO:0007744" key="52">
    <source>
        <dbReference type="PDB" id="3C1G"/>
    </source>
</evidence>
<evidence type="ECO:0007744" key="53">
    <source>
        <dbReference type="PDB" id="3C1H"/>
    </source>
</evidence>
<evidence type="ECO:0007744" key="54">
    <source>
        <dbReference type="PDB" id="3C1I"/>
    </source>
</evidence>
<evidence type="ECO:0007744" key="55">
    <source>
        <dbReference type="PDB" id="3C1J"/>
    </source>
</evidence>
<evidence type="ECO:0007744" key="56">
    <source>
        <dbReference type="PDB" id="6B21"/>
    </source>
</evidence>
<evidence type="ECO:0007829" key="57">
    <source>
        <dbReference type="PDB" id="1U7G"/>
    </source>
</evidence>
<evidence type="ECO:0007829" key="58">
    <source>
        <dbReference type="PDB" id="1XQF"/>
    </source>
</evidence>
<evidence type="ECO:0007829" key="59">
    <source>
        <dbReference type="PDB" id="2NS1"/>
    </source>
</evidence>
<evidence type="ECO:0007829" key="60">
    <source>
        <dbReference type="PDB" id="3C1J"/>
    </source>
</evidence>
<dbReference type="EMBL" id="U40429">
    <property type="protein sequence ID" value="AAD14837.1"/>
    <property type="molecule type" value="Genomic_DNA"/>
</dbReference>
<dbReference type="EMBL" id="U82664">
    <property type="protein sequence ID" value="AAB40207.1"/>
    <property type="molecule type" value="Genomic_DNA"/>
</dbReference>
<dbReference type="EMBL" id="U00096">
    <property type="protein sequence ID" value="AAC73554.1"/>
    <property type="molecule type" value="Genomic_DNA"/>
</dbReference>
<dbReference type="EMBL" id="AP009048">
    <property type="protein sequence ID" value="BAE76231.1"/>
    <property type="molecule type" value="Genomic_DNA"/>
</dbReference>
<dbReference type="EMBL" id="M63308">
    <property type="status" value="NOT_ANNOTATED_CDS"/>
    <property type="molecule type" value="Genomic_DNA"/>
</dbReference>
<dbReference type="PIR" id="A90692">
    <property type="entry name" value="A90692"/>
</dbReference>
<dbReference type="PIR" id="C64775">
    <property type="entry name" value="C64775"/>
</dbReference>
<dbReference type="PIR" id="E85542">
    <property type="entry name" value="E85542"/>
</dbReference>
<dbReference type="RefSeq" id="NP_414985.1">
    <property type="nucleotide sequence ID" value="NC_000913.3"/>
</dbReference>
<dbReference type="RefSeq" id="WP_000685029.1">
    <property type="nucleotide sequence ID" value="NZ_STEB01000007.1"/>
</dbReference>
<dbReference type="PDB" id="1U77">
    <property type="method" value="X-ray"/>
    <property type="resolution" value="2.00 A"/>
    <property type="chains" value="A=23-407"/>
</dbReference>
<dbReference type="PDB" id="1U7C">
    <property type="method" value="X-ray"/>
    <property type="resolution" value="1.85 A"/>
    <property type="chains" value="A=23-407"/>
</dbReference>
<dbReference type="PDB" id="1U7G">
    <property type="method" value="X-ray"/>
    <property type="resolution" value="1.40 A"/>
    <property type="chains" value="A=23-407"/>
</dbReference>
<dbReference type="PDB" id="1XQE">
    <property type="method" value="X-ray"/>
    <property type="resolution" value="2.10 A"/>
    <property type="chains" value="A=23-428"/>
</dbReference>
<dbReference type="PDB" id="1XQF">
    <property type="method" value="X-ray"/>
    <property type="resolution" value="1.80 A"/>
    <property type="chains" value="A=23-428"/>
</dbReference>
<dbReference type="PDB" id="2NMR">
    <property type="method" value="X-ray"/>
    <property type="resolution" value="2.10 A"/>
    <property type="chains" value="A=23-428"/>
</dbReference>
<dbReference type="PDB" id="2NOP">
    <property type="method" value="X-ray"/>
    <property type="resolution" value="2.00 A"/>
    <property type="chains" value="A=23-428"/>
</dbReference>
<dbReference type="PDB" id="2NOW">
    <property type="method" value="X-ray"/>
    <property type="resolution" value="2.20 A"/>
    <property type="chains" value="A=23-428"/>
</dbReference>
<dbReference type="PDB" id="2NPC">
    <property type="method" value="X-ray"/>
    <property type="resolution" value="2.10 A"/>
    <property type="chains" value="A=23-428"/>
</dbReference>
<dbReference type="PDB" id="2NPD">
    <property type="method" value="X-ray"/>
    <property type="resolution" value="2.10 A"/>
    <property type="chains" value="A=23-428"/>
</dbReference>
<dbReference type="PDB" id="2NPE">
    <property type="method" value="X-ray"/>
    <property type="resolution" value="2.10 A"/>
    <property type="chains" value="A=23-428"/>
</dbReference>
<dbReference type="PDB" id="2NPG">
    <property type="method" value="X-ray"/>
    <property type="resolution" value="2.00 A"/>
    <property type="chains" value="A=23-428"/>
</dbReference>
<dbReference type="PDB" id="2NPJ">
    <property type="method" value="X-ray"/>
    <property type="resolution" value="2.00 A"/>
    <property type="chains" value="A=23-428"/>
</dbReference>
<dbReference type="PDB" id="2NPK">
    <property type="method" value="X-ray"/>
    <property type="resolution" value="2.00 A"/>
    <property type="chains" value="A=23-428"/>
</dbReference>
<dbReference type="PDB" id="2NS1">
    <property type="method" value="X-ray"/>
    <property type="resolution" value="1.96 A"/>
    <property type="chains" value="A=23-428"/>
</dbReference>
<dbReference type="PDB" id="2NUU">
    <property type="method" value="X-ray"/>
    <property type="resolution" value="2.50 A"/>
    <property type="chains" value="A/B/C/D/E/F=25-428"/>
</dbReference>
<dbReference type="PDB" id="3C1G">
    <property type="method" value="X-ray"/>
    <property type="resolution" value="2.30 A"/>
    <property type="chains" value="A=23-428"/>
</dbReference>
<dbReference type="PDB" id="3C1H">
    <property type="method" value="X-ray"/>
    <property type="resolution" value="2.20 A"/>
    <property type="chains" value="A=23-428"/>
</dbReference>
<dbReference type="PDB" id="3C1I">
    <property type="method" value="X-ray"/>
    <property type="resolution" value="2.30 A"/>
    <property type="chains" value="A=23-428"/>
</dbReference>
<dbReference type="PDB" id="3C1J">
    <property type="method" value="X-ray"/>
    <property type="resolution" value="2.00 A"/>
    <property type="chains" value="A=23-428"/>
</dbReference>
<dbReference type="PDB" id="6B21">
    <property type="method" value="X-ray"/>
    <property type="resolution" value="2.45 A"/>
    <property type="chains" value="A=26-428"/>
</dbReference>
<dbReference type="PDBsum" id="1U77"/>
<dbReference type="PDBsum" id="1U7C"/>
<dbReference type="PDBsum" id="1U7G"/>
<dbReference type="PDBsum" id="1XQE"/>
<dbReference type="PDBsum" id="1XQF"/>
<dbReference type="PDBsum" id="2NMR"/>
<dbReference type="PDBsum" id="2NOP"/>
<dbReference type="PDBsum" id="2NOW"/>
<dbReference type="PDBsum" id="2NPC"/>
<dbReference type="PDBsum" id="2NPD"/>
<dbReference type="PDBsum" id="2NPE"/>
<dbReference type="PDBsum" id="2NPG"/>
<dbReference type="PDBsum" id="2NPJ"/>
<dbReference type="PDBsum" id="2NPK"/>
<dbReference type="PDBsum" id="2NS1"/>
<dbReference type="PDBsum" id="2NUU"/>
<dbReference type="PDBsum" id="3C1G"/>
<dbReference type="PDBsum" id="3C1H"/>
<dbReference type="PDBsum" id="3C1I"/>
<dbReference type="PDBsum" id="3C1J"/>
<dbReference type="PDBsum" id="6B21"/>
<dbReference type="PCDDB" id="P69681"/>
<dbReference type="SMR" id="P69681"/>
<dbReference type="BioGRID" id="4259856">
    <property type="interactions" value="9"/>
</dbReference>
<dbReference type="BioGRID" id="849473">
    <property type="interactions" value="3"/>
</dbReference>
<dbReference type="DIP" id="DIP-29874N"/>
<dbReference type="FunCoup" id="P69681">
    <property type="interactions" value="474"/>
</dbReference>
<dbReference type="IntAct" id="P69681">
    <property type="interactions" value="3"/>
</dbReference>
<dbReference type="STRING" id="511145.b0451"/>
<dbReference type="DrugBank" id="DB04147">
    <property type="generic name" value="Dodecyldimethylamine N-oxide"/>
</dbReference>
<dbReference type="DrugBank" id="DB01828">
    <property type="generic name" value="Methylamine"/>
</dbReference>
<dbReference type="TCDB" id="1.A.11.1.1">
    <property type="family name" value="the ammonium transporter channel (amt) family"/>
</dbReference>
<dbReference type="jPOST" id="P69681"/>
<dbReference type="PaxDb" id="511145-b0451"/>
<dbReference type="EnsemblBacteria" id="AAC73554">
    <property type="protein sequence ID" value="AAC73554"/>
    <property type="gene ID" value="b0451"/>
</dbReference>
<dbReference type="GeneID" id="93776999"/>
<dbReference type="GeneID" id="945084"/>
<dbReference type="KEGG" id="ecj:JW0441"/>
<dbReference type="KEGG" id="eco:b0451"/>
<dbReference type="KEGG" id="ecoc:C3026_02210"/>
<dbReference type="PATRIC" id="fig|1411691.4.peg.1824"/>
<dbReference type="EchoBASE" id="EB1768"/>
<dbReference type="eggNOG" id="COG0004">
    <property type="taxonomic scope" value="Bacteria"/>
</dbReference>
<dbReference type="HOGENOM" id="CLU_000445_33_0_6"/>
<dbReference type="InParanoid" id="P69681"/>
<dbReference type="OMA" id="FNAGSWL"/>
<dbReference type="OrthoDB" id="9816034at2"/>
<dbReference type="PhylomeDB" id="P69681"/>
<dbReference type="BioCyc" id="EcoCyc:AMTB-MONOMER"/>
<dbReference type="BioCyc" id="MetaCyc:AMTB-MONOMER"/>
<dbReference type="EvolutionaryTrace" id="P69681"/>
<dbReference type="PRO" id="PR:P69681"/>
<dbReference type="Proteomes" id="UP000000625">
    <property type="component" value="Chromosome"/>
</dbReference>
<dbReference type="GO" id="GO:0005886">
    <property type="term" value="C:plasma membrane"/>
    <property type="evidence" value="ECO:0000318"/>
    <property type="project" value="GO_Central"/>
</dbReference>
<dbReference type="GO" id="GO:0008519">
    <property type="term" value="F:ammonium channel activity"/>
    <property type="evidence" value="ECO:0000314"/>
    <property type="project" value="UniProtKB"/>
</dbReference>
<dbReference type="GO" id="GO:0042802">
    <property type="term" value="F:identical protein binding"/>
    <property type="evidence" value="ECO:0000353"/>
    <property type="project" value="IntAct"/>
</dbReference>
<dbReference type="GO" id="GO:0072488">
    <property type="term" value="P:ammonium transmembrane transport"/>
    <property type="evidence" value="ECO:0000314"/>
    <property type="project" value="UniProtKB"/>
</dbReference>
<dbReference type="GO" id="GO:0015670">
    <property type="term" value="P:carbon dioxide transport"/>
    <property type="evidence" value="ECO:0000314"/>
    <property type="project" value="UniProtKB"/>
</dbReference>
<dbReference type="FunFam" id="1.10.3430.10:FF:000004">
    <property type="entry name" value="Ammonium transporter"/>
    <property type="match status" value="1"/>
</dbReference>
<dbReference type="Gene3D" id="1.10.3430.10">
    <property type="entry name" value="Ammonium transporter AmtB like domains"/>
    <property type="match status" value="1"/>
</dbReference>
<dbReference type="InterPro" id="IPR029020">
    <property type="entry name" value="Ammonium/urea_transptr"/>
</dbReference>
<dbReference type="InterPro" id="IPR001905">
    <property type="entry name" value="Ammonium_transpt"/>
</dbReference>
<dbReference type="InterPro" id="IPR018047">
    <property type="entry name" value="Ammonium_transpt_CS"/>
</dbReference>
<dbReference type="InterPro" id="IPR024041">
    <property type="entry name" value="NH4_transpt_AmtB-like_dom"/>
</dbReference>
<dbReference type="NCBIfam" id="TIGR00836">
    <property type="entry name" value="amt"/>
    <property type="match status" value="1"/>
</dbReference>
<dbReference type="NCBIfam" id="NF007947">
    <property type="entry name" value="PRK10666.1"/>
    <property type="match status" value="1"/>
</dbReference>
<dbReference type="PANTHER" id="PTHR43029">
    <property type="entry name" value="AMMONIUM TRANSPORTER MEP2"/>
    <property type="match status" value="1"/>
</dbReference>
<dbReference type="PANTHER" id="PTHR43029:SF10">
    <property type="entry name" value="AMMONIUM TRANSPORTER MEP2"/>
    <property type="match status" value="1"/>
</dbReference>
<dbReference type="Pfam" id="PF00909">
    <property type="entry name" value="Ammonium_transp"/>
    <property type="match status" value="1"/>
</dbReference>
<dbReference type="SUPFAM" id="SSF111352">
    <property type="entry name" value="Ammonium transporter"/>
    <property type="match status" value="1"/>
</dbReference>
<dbReference type="PROSITE" id="PS01219">
    <property type="entry name" value="AMMONIUM_TRANSP"/>
    <property type="match status" value="1"/>
</dbReference>
<gene>
    <name evidence="29" type="primary">amtB</name>
    <name type="synonym">ybaG</name>
    <name type="ordered locus">b0451</name>
    <name type="ordered locus">JW0441</name>
</gene>
<keyword id="KW-0002">3D-structure</keyword>
<keyword id="KW-0924">Ammonia transport</keyword>
<keyword id="KW-0997">Cell inner membrane</keyword>
<keyword id="KW-1003">Cell membrane</keyword>
<keyword id="KW-0903">Direct protein sequencing</keyword>
<keyword id="KW-0472">Membrane</keyword>
<keyword id="KW-1185">Reference proteome</keyword>
<keyword id="KW-0732">Signal</keyword>
<keyword id="KW-0812">Transmembrane</keyword>
<keyword id="KW-1133">Transmembrane helix</keyword>
<keyword id="KW-0813">Transport</keyword>
<protein>
    <recommendedName>
        <fullName evidence="24 25">Ammonium transporter AmtB</fullName>
    </recommendedName>
    <alternativeName>
        <fullName evidence="27 28">Ammonia channel AmtB</fullName>
    </alternativeName>
    <alternativeName>
        <fullName evidence="26">Ammonium channel AmtB</fullName>
    </alternativeName>
</protein>
<accession>P69681</accession>
<accession>P37905</accession>
<accession>Q2MBX5</accession>
<feature type="signal peptide" evidence="5">
    <location>
        <begin position="1"/>
        <end position="22"/>
    </location>
</feature>
<feature type="chain" id="PRO_0000001307" description="Ammonium transporter AmtB">
    <location>
        <begin position="23"/>
        <end position="428"/>
    </location>
</feature>
<feature type="topological domain" description="Periplasmic" evidence="5 6 11">
    <location>
        <begin position="23"/>
        <end position="32"/>
    </location>
</feature>
<feature type="transmembrane region" description="Helical" evidence="5 6 11">
    <location>
        <begin position="33"/>
        <end position="54"/>
    </location>
</feature>
<feature type="topological domain" description="Cytoplasmic" evidence="5 6 11">
    <location>
        <begin position="55"/>
        <end position="65"/>
    </location>
</feature>
<feature type="transmembrane region" description="Helical" evidence="5 6 11">
    <location>
        <begin position="66"/>
        <end position="90"/>
    </location>
</feature>
<feature type="topological domain" description="Periplasmic" evidence="5 6 11">
    <location>
        <begin position="91"/>
        <end position="119"/>
    </location>
</feature>
<feature type="transmembrane region" description="Helical" evidence="5 6 11">
    <location>
        <begin position="120"/>
        <end position="142"/>
    </location>
</feature>
<feature type="topological domain" description="Cytoplasmic" evidence="5 6 11">
    <location>
        <begin position="143"/>
        <end position="146"/>
    </location>
</feature>
<feature type="transmembrane region" description="Helical" evidence="5 6 11">
    <location>
        <begin position="147"/>
        <end position="171"/>
    </location>
</feature>
<feature type="topological domain" description="Periplasmic" evidence="5 6 11">
    <location>
        <begin position="172"/>
        <end position="185"/>
    </location>
</feature>
<feature type="transmembrane region" description="Helical" evidence="5 6 11">
    <location>
        <begin position="186"/>
        <end position="201"/>
    </location>
</feature>
<feature type="topological domain" description="Cytoplasmic" evidence="5 6 11">
    <location>
        <begin position="202"/>
        <end position="221"/>
    </location>
</feature>
<feature type="transmembrane region" description="Helical" evidence="5 6 11">
    <location>
        <begin position="222"/>
        <end position="241"/>
    </location>
</feature>
<feature type="topological domain" description="Periplasmic" evidence="5 6 11">
    <location>
        <begin position="242"/>
        <end position="248"/>
    </location>
</feature>
<feature type="transmembrane region" description="Helical" evidence="5 6 11">
    <location>
        <begin position="249"/>
        <end position="273"/>
    </location>
</feature>
<feature type="topological domain" description="Cytoplasmic" evidence="5 6 11">
    <location>
        <begin position="274"/>
        <end position="279"/>
    </location>
</feature>
<feature type="transmembrane region" description="Helical" evidence="5 6 11">
    <location>
        <begin position="280"/>
        <end position="300"/>
    </location>
</feature>
<feature type="topological domain" description="Periplasmic" evidence="5 6 11">
    <location>
        <begin position="301"/>
        <end position="302"/>
    </location>
</feature>
<feature type="transmembrane region" description="Helical" evidence="5 6 11">
    <location>
        <begin position="303"/>
        <end position="321"/>
    </location>
</feature>
<feature type="topological domain" description="Cytoplasmic" evidence="5 6 11">
    <location>
        <begin position="322"/>
        <end position="333"/>
    </location>
</feature>
<feature type="transmembrane region" description="Helical" evidence="5 6 11">
    <location>
        <begin position="334"/>
        <end position="355"/>
    </location>
</feature>
<feature type="topological domain" description="Periplasmic" evidence="5 6 11">
    <location>
        <begin position="356"/>
        <end position="370"/>
    </location>
</feature>
<feature type="transmembrane region" description="Helical" evidence="5 6 11">
    <location>
        <begin position="371"/>
        <end position="399"/>
    </location>
</feature>
<feature type="topological domain" description="Cytoplasmic" evidence="5 6 8 11">
    <location>
        <begin position="400"/>
        <end position="428"/>
    </location>
</feature>
<feature type="binding site" evidence="5">
    <location>
        <position position="241"/>
    </location>
    <ligand>
        <name>NH4(+)</name>
        <dbReference type="ChEBI" id="CHEBI:28938"/>
    </ligand>
</feature>
<feature type="site" description="Important for the deprotonation of the ammonium cation" evidence="17">
    <location>
        <position position="182"/>
    </location>
</feature>
<feature type="site" description="Twin-His motif. Important for optimum substrate conductance" evidence="31 33 35">
    <location>
        <position position="190"/>
    </location>
</feature>
<feature type="site" description="Important for optimum substrate conductance" evidence="32">
    <location>
        <position position="237"/>
    </location>
</feature>
<feature type="site" description="Twin-His motif. Important for optimum substrate conductance" evidence="31 33 35">
    <location>
        <position position="340"/>
    </location>
</feature>
<feature type="mutagenesis site" description="1.4-fold increase in transport activity with methylammonium as substrate. Shows 80% inhibition by thallium." evidence="16">
    <original>F</original>
    <variation>A</variation>
    <location>
        <position position="129"/>
    </location>
</feature>
<feature type="mutagenesis site" description="2.5-fold increase in transport activity with methylammonium as substrate. Shows 80% inhibition by thallium." evidence="16">
    <original>W</original>
    <variation>A</variation>
    <location>
        <position position="170"/>
    </location>
</feature>
<feature type="mutagenesis site" description="5-fold increase in transport activity with methylammonium as substrate." evidence="15">
    <original>W</original>
    <variation>L</variation>
    <location>
        <position position="170"/>
    </location>
</feature>
<feature type="mutagenesis site" description="Abolishes the positive allosteric modulation observed for binding phosphatidylethanolamine and cardiolipin-like molecules." evidence="21">
    <original>H</original>
    <variation>A</variation>
    <location>
        <position position="178"/>
    </location>
</feature>
<feature type="mutagenesis site" description="Impairs ammonium transport. Loss of activity with methylammonium as substrate. GlnK remains fully uridylylated and localizes to the cytoplasm during a transient increase in extracellular ammonium." evidence="4 23">
    <original>D</original>
    <variation>A</variation>
    <location>
        <position position="182"/>
    </location>
</feature>
<feature type="mutagenesis site" description="Impairs ammonium transport. Retains 71% of wild-type activity with methylammonium as substrate. Allows some complex formation with GlnK during a transient increase in extracellular ammonium." evidence="4 23">
    <original>D</original>
    <variation>E</variation>
    <location>
        <position position="182"/>
    </location>
</feature>
<feature type="mutagenesis site" description="Does not prevent transport of ammonia. Loss of transport activity with methylammonium and methylamine. Shows normal GlnK-AmtB complex formation after ammonium shock. Loss of both methylamine and ammonia transport; when associated with A-340." evidence="11 19 23">
    <original>H</original>
    <variation>A</variation>
    <location>
        <position position="190"/>
    </location>
</feature>
<feature type="mutagenesis site" description="Loss of transport activity with methylammonium as substrate. Shows normal GlnK-AmtB complex formation after ammonium shock." evidence="11">
    <original>H</original>
    <variation>D</variation>
    <variation>F</variation>
    <variation>N</variation>
    <variation>Q</variation>
    <location>
        <position position="190"/>
    </location>
</feature>
<feature type="mutagenesis site" description="Retains 25% of transport activity with methylammonium as substrate. Shows normal GlnK-AmtB complex formation after ammonium shock." evidence="11">
    <original>H</original>
    <variation>E</variation>
    <location>
        <position position="190"/>
    </location>
</feature>
<feature type="mutagenesis site" description="Loss of transport activity with methylammonium as substrate." evidence="11">
    <original>H</original>
    <variation>K</variation>
    <location>
        <position position="190"/>
    </location>
</feature>
<feature type="mutagenesis site" description="Loss of transport activity with methylammonium as substrate. Cannot form GlnK-AmtB complex after ammonium shock." evidence="11">
    <original>H</original>
    <variation>T</variation>
    <location>
        <position position="190"/>
    </location>
</feature>
<feature type="mutagenesis site" description="Loss of transport activity with methylammonium as substrate." evidence="16">
    <original>W</original>
    <variation>A</variation>
    <location>
        <position position="234"/>
    </location>
</feature>
<feature type="mutagenesis site" description="Retains 80% of transport activity with methylammonium as substrate." evidence="16">
    <original>W</original>
    <variation>F</variation>
    <location>
        <position position="234"/>
    </location>
</feature>
<feature type="mutagenesis site" description="Loss of transport activity with methylammonium as substrate." evidence="16">
    <original>F</original>
    <variation>A</variation>
    <variation>H</variation>
    <variation>L</variation>
    <variation>Q</variation>
    <variation>S</variation>
    <variation>W</variation>
    <location>
        <position position="237"/>
    </location>
</feature>
<feature type="mutagenesis site" description="4-fold increase in transport activity with methylammonium as substrate. Shows 80% inhibition by thallium." evidence="16">
    <original>S</original>
    <variation>A</variation>
    <location>
        <position position="241"/>
    </location>
</feature>
<feature type="mutagenesis site" description="Does not prevent transport of ammonia. Loss of transport activity with methylammonium and methylamine. Shows normal GlnK-AmtB complex formation after ammonium shock. Loss of both methylamine and ammonia transport; when associated with A-190." evidence="11 19 23">
    <original>H</original>
    <variation>A</variation>
    <location>
        <position position="340"/>
    </location>
</feature>
<feature type="mutagenesis site" description="Loss of transport activity with methylammonium as substrate. Shows normal GlnK-AmtB complex formation after ammonium shock." evidence="11">
    <original>H</original>
    <variation>E</variation>
    <variation>F</variation>
    <location>
        <position position="340"/>
    </location>
</feature>
<feature type="mutagenesis site" description="Loss of transport activity with methylammonium as substrate." evidence="11">
    <original>H</original>
    <variation>T</variation>
    <location>
        <position position="340"/>
    </location>
</feature>
<feature type="mutagenesis site" description="Reduced methylamine transport activity. Cannot interact with GlnK." evidence="2">
    <location>
        <begin position="404"/>
        <end position="428"/>
    </location>
</feature>
<feature type="mutagenesis site" description="Retains 27% of wild-type activity." evidence="14">
    <location>
        <begin position="405"/>
        <end position="428"/>
    </location>
</feature>
<feature type="mutagenesis site" description="Almost loss of activity." evidence="14">
    <original>R</original>
    <variation>A</variation>
    <location>
        <position position="406"/>
    </location>
</feature>
<feature type="mutagenesis site" description="Almost loss of activity." evidence="14">
    <original>G</original>
    <variation>A</variation>
    <variation>D</variation>
    <variation>E</variation>
    <variation>N</variation>
    <variation>R</variation>
    <location>
        <position position="415"/>
    </location>
</feature>
<feature type="mutagenesis site" description="Retains 43% of wild-type activity." evidence="14">
    <location>
        <begin position="421"/>
        <end position="428"/>
    </location>
</feature>
<feature type="mutagenesis site" description="Retains 21% of wild-type activity." evidence="14">
    <location>
        <begin position="426"/>
        <end position="428"/>
    </location>
</feature>
<feature type="mutagenesis site" description="Retains 11% of wild-type activity." evidence="14">
    <original>Y</original>
    <variation>G</variation>
    <location>
        <position position="426"/>
    </location>
</feature>
<feature type="mutagenesis site" description="Retains 12% of wild-type activity." evidence="14">
    <location>
        <begin position="427"/>
        <end position="428"/>
    </location>
</feature>
<feature type="mutagenesis site" description="Retains 33% of wild-type activity." evidence="14">
    <original>N</original>
    <variation>A</variation>
    <location>
        <position position="427"/>
    </location>
</feature>
<feature type="mutagenesis site" description="No change in activity." evidence="14">
    <original>N</original>
    <variation>D</variation>
    <location>
        <position position="427"/>
    </location>
</feature>
<feature type="mutagenesis site" description="Retains 28% of wild-type activity." evidence="14">
    <original>N</original>
    <variation>Q</variation>
    <location>
        <position position="427"/>
    </location>
</feature>
<feature type="mutagenesis site" description="No change in activity." evidence="14">
    <location>
        <position position="428"/>
    </location>
</feature>
<feature type="sequence conflict" description="In Ref. 5; M63308." evidence="30" ref="5">
    <original>QLESIA</original>
    <variation>SWKASP</variation>
    <location>
        <begin position="377"/>
        <end position="382"/>
    </location>
</feature>
<feature type="helix" evidence="57">
    <location>
        <begin position="29"/>
        <end position="46"/>
    </location>
</feature>
<feature type="helix" evidence="57">
    <location>
        <begin position="49"/>
        <end position="55"/>
    </location>
</feature>
<feature type="helix" evidence="57">
    <location>
        <begin position="60"/>
        <end position="83"/>
    </location>
</feature>
<feature type="helix" evidence="57">
    <location>
        <begin position="85"/>
        <end position="90"/>
    </location>
</feature>
<feature type="strand" evidence="57">
    <location>
        <begin position="94"/>
        <end position="96"/>
    </location>
</feature>
<feature type="strand" evidence="60">
    <location>
        <begin position="100"/>
        <end position="102"/>
    </location>
</feature>
<feature type="helix" evidence="57">
    <location>
        <begin position="103"/>
        <end position="105"/>
    </location>
</feature>
<feature type="helix" evidence="57">
    <location>
        <begin position="119"/>
        <end position="141"/>
    </location>
</feature>
<feature type="helix" evidence="57">
    <location>
        <begin position="142"/>
        <end position="144"/>
    </location>
</feature>
<feature type="helix" evidence="57">
    <location>
        <begin position="147"/>
        <end position="160"/>
    </location>
</feature>
<feature type="helix" evidence="57">
    <location>
        <begin position="162"/>
        <end position="170"/>
    </location>
</feature>
<feature type="strand" evidence="58">
    <location>
        <begin position="171"/>
        <end position="173"/>
    </location>
</feature>
<feature type="helix" evidence="57">
    <location>
        <begin position="174"/>
        <end position="178"/>
    </location>
</feature>
<feature type="turn" evidence="57">
    <location>
        <begin position="186"/>
        <end position="189"/>
    </location>
</feature>
<feature type="helix" evidence="57">
    <location>
        <begin position="190"/>
        <end position="203"/>
    </location>
</feature>
<feature type="turn" evidence="59">
    <location>
        <begin position="208"/>
        <end position="212"/>
    </location>
</feature>
<feature type="helix" evidence="57">
    <location>
        <begin position="217"/>
        <end position="219"/>
    </location>
</feature>
<feature type="helix" evidence="57">
    <location>
        <begin position="220"/>
        <end position="239"/>
    </location>
</feature>
<feature type="helix" evidence="57">
    <location>
        <begin position="240"/>
        <end position="242"/>
    </location>
</feature>
<feature type="strand" evidence="57">
    <location>
        <begin position="243"/>
        <end position="246"/>
    </location>
</feature>
<feature type="helix" evidence="57">
    <location>
        <begin position="247"/>
        <end position="275"/>
    </location>
</feature>
<feature type="helix" evidence="57">
    <location>
        <begin position="280"/>
        <end position="294"/>
    </location>
</feature>
<feature type="turn" evidence="57">
    <location>
        <begin position="295"/>
        <end position="300"/>
    </location>
</feature>
<feature type="helix" evidence="57">
    <location>
        <begin position="303"/>
        <end position="328"/>
    </location>
</feature>
<feature type="helix" evidence="57">
    <location>
        <begin position="333"/>
        <end position="335"/>
    </location>
</feature>
<feature type="helix" evidence="57">
    <location>
        <begin position="336"/>
        <end position="354"/>
    </location>
</feature>
<feature type="helix" evidence="57">
    <location>
        <begin position="357"/>
        <end position="359"/>
    </location>
</feature>
<feature type="helix" evidence="57">
    <location>
        <begin position="370"/>
        <end position="402"/>
    </location>
</feature>
<feature type="helix" evidence="59">
    <location>
        <begin position="409"/>
        <end position="414"/>
    </location>
</feature>
<feature type="helix" evidence="59">
    <location>
        <begin position="416"/>
        <end position="421"/>
    </location>
</feature>
<comment type="function">
    <text evidence="2 3 4 5 6 7 10 15 16 17 22 23">Involved in the uptake of ammonium/ammonia (NH(4)(+)/NH(3)) (PubMed:14668330, PubMed:15361618, PubMed:15563598, PubMed:15876187, PubMed:16910683, PubMed:30211659, PubMed:32662768). Transport is electrogenic (PubMed:30211659, PubMed:32662768). Following sequestration of NH(4)(+) at the periplasmic face, NH(4)(+) is deprotonated and neutral NH(3) is transported into the cytoplasm (PubMed:15876187, PubMed:16910683, PubMed:18362341, PubMed:19278252, PubMed:32662768). Neutral NH(3) and charged H(+) are carried separately across the membrane on a unique two-lane pathway, before recombining to NH(4)(+) inside the cell (PubMed:32662768). In vitro can also transport the larger analogs methylamine and methylammonium (PubMed:11847102, PubMed:12023896, PubMed:14668330, PubMed:15876187, PubMed:17998534, PubMed:18362341). Also acts as a sensor of the extracellular ammonium concentration (PubMed:14668330).</text>
</comment>
<comment type="activity regulation">
    <text evidence="2 4 7 9 16 18">In the presence of high extracellular ammonium concentrations, transport activity is inhibited by interaction with the regulatory protein GlnK (PubMed:11847102, PubMed:14668330, PubMed:16864585). Ammonium transport through AmtB is required for GlnK sequestration (PubMed:14668330). Formation of the GlnK-AmtB complex is influenced by intracellular pools of the effector molecules ATP, ADP, Mg(2+) and 2-oxoglutarate (PubMed:16864585, PubMed:20639578). The rapid drop in the 2-oxoglutarate pool upon ammonium influx and a simultaneous, but transient, change in the ATP/ADP ratio promotes AmtB-GlnK complex formation (PubMed:20639578). The GlnK-AmtB interaction is also controlled by the level of intracellular glutamine and the uridylylation status of GlnK (PubMed:14668330). Inhibited by imidazole and thallium, which likely act by competitive binding to the periplasmic ammonium binding site (PubMed:18362341). Transport activity is independent of the membrane potential and of ATP hydrolysis (PubMed:15876187).</text>
</comment>
<comment type="subunit">
    <text evidence="1 2 3 4 5 6 9 11 12 13 18">Homotrimer (PubMed:12023896, PubMed:15361618, PubMed:15563598, PubMed:17040913). In response to elevation of the extracellular ammonium concentration, interacts and forms a complex with GlnK (PubMed:10637624, PubMed:11847102, PubMed:14668330, PubMed:16864585, PubMed:17190799, PubMed:17220269, PubMed:20639578). Interacts with GlnK with a stoichiometry of AmtB(3):GlnK(3) (PubMed:17190799, PubMed:17220269). Sequestration of GlnK is reversible (PubMed:14668330).</text>
</comment>
<comment type="interaction">
    <interactant intactId="EBI-9137905">
        <id>P69681</id>
    </interactant>
    <interactant intactId="EBI-9137905">
        <id>P69681</id>
        <label>amtB</label>
    </interactant>
    <organismsDiffer>false</organismsDiffer>
    <experiments>4</experiments>
</comment>
<comment type="interaction">
    <interactant intactId="EBI-9137905">
        <id>P69681</id>
    </interactant>
    <interactant intactId="EBI-559503">
        <id>P0AC55</id>
        <label>glnK</label>
    </interactant>
    <organismsDiffer>false</organismsDiffer>
    <experiments>3</experiments>
</comment>
<comment type="subcellular location">
    <subcellularLocation>
        <location evidence="2 3 5 6 11">Cell inner membrane</location>
        <topology evidence="5 6 11">Multi-pass membrane protein</topology>
    </subcellularLocation>
</comment>
<comment type="domain">
    <text evidence="2 12 14">The C-terminal cytoplasmic domain plays a significant role in normal function and it might also mediate co-operativity between the three subunits (PubMed:17453422). The C-terminal cytoplasmic domain is also required for interaction with the T-loop of GlnK (PubMed:11847102, PubMed:17190799).</text>
</comment>
<comment type="miscellaneous">
    <text evidence="20 21 22">Specifically binds 1-palmitoyl-2-oleoyl phosphatidylglycerol (POPG), which increases protein stability (PubMed:24899312). POPG is an essential cofactor for transport activity and, in the absence of POPG, AmtB cannot complete the full translocation cycle (PubMed:30211659). Can also bind phosphatidylethanolamine and cardiolipin-like molecules, leading to positive allosteric modulation (PubMed:29507234).</text>
</comment>
<comment type="similarity">
    <text evidence="30">Belongs to the ammonia transporter channel (TC 1.A.11.2) family.</text>
</comment>
<comment type="caution">
    <text evidence="34">Methylammonium (MeA) has been widely used to measure ammonium transport activity because the radioactive tracer [14C]MeA is commercially available. However, MeA is a poor substrate analog for AmtB, not well suited to elucidate the mechanistic details of AmtB activity.</text>
</comment>
<organism>
    <name type="scientific">Escherichia coli (strain K12)</name>
    <dbReference type="NCBI Taxonomy" id="83333"/>
    <lineage>
        <taxon>Bacteria</taxon>
        <taxon>Pseudomonadati</taxon>
        <taxon>Pseudomonadota</taxon>
        <taxon>Gammaproteobacteria</taxon>
        <taxon>Enterobacterales</taxon>
        <taxon>Enterobacteriaceae</taxon>
        <taxon>Escherichia</taxon>
    </lineage>
</organism>
<sequence>MKIATIKTGLASLAMLPGLVMAAPAVADKADNAFMMICTALVLFMTIPGIALFYGGLIRGKNVLSMLTQVTVTFALVCILWVVYGYSLAFGEGNNFFGNINWLMLKNIELTAVMGSIYQYIHVAFQGSFACITVGLIVGALAERIRFSAVLIFVVVWLTLSYIPIAHMVWGGGLLASHGALDFAGGTVVHINAAIAGLVGAYLIGKRVGFGKEAFKPHNLPMVFTGTAILYIGWFGFNAGSAGTANEIAALAFVNTVVATAAAILGWIFGEWALRGKPSLLGACSGAIAGLVGVTPACGYIGVGGALIIGVVAGLAGLWGVTMLKRLLRVDDPCDVFGVHGVCGIVGCIMTGIFAASSLGGVGFAEGVTMGHQLLVQLESIAITIVWSGVVAFIGYKLADLTVGLRVPEEQEREGLDVNSHGENAYNA</sequence>
<reference key="1">
    <citation type="journal article" date="1996" name="Mol. Microbiol.">
        <title>An alternative PII protein in the regulation of glutamine synthetase in Escherichia coli.</title>
        <authorList>
            <person name="van Heeswijk W.C."/>
            <person name="Hoving S."/>
            <person name="Molenaar D."/>
            <person name="Stegeman B."/>
            <person name="Kahn D."/>
            <person name="Westerhoff H.V."/>
        </authorList>
    </citation>
    <scope>NUCLEOTIDE SEQUENCE [GENOMIC DNA]</scope>
    <source>
        <strain>K12 / W3110 / ATCC 27325 / DSM 5911</strain>
    </source>
</reference>
<reference key="2">
    <citation type="submission" date="1997-01" db="EMBL/GenBank/DDBJ databases">
        <title>Sequence of minutes 4-25 of Escherichia coli.</title>
        <authorList>
            <person name="Chung E."/>
            <person name="Allen E."/>
            <person name="Araujo R."/>
            <person name="Aparicio A.M."/>
            <person name="Davis K."/>
            <person name="Duncan M."/>
            <person name="Federspiel N."/>
            <person name="Hyman R."/>
            <person name="Kalman S."/>
            <person name="Komp C."/>
            <person name="Kurdi O."/>
            <person name="Lew H."/>
            <person name="Lin D."/>
            <person name="Namath A."/>
            <person name="Oefner P."/>
            <person name="Roberts D."/>
            <person name="Schramm S."/>
            <person name="Davis R.W."/>
        </authorList>
    </citation>
    <scope>NUCLEOTIDE SEQUENCE [LARGE SCALE GENOMIC DNA]</scope>
    <source>
        <strain>K12 / MG1655 / ATCC 47076</strain>
    </source>
</reference>
<reference key="3">
    <citation type="journal article" date="1997" name="Science">
        <title>The complete genome sequence of Escherichia coli K-12.</title>
        <authorList>
            <person name="Blattner F.R."/>
            <person name="Plunkett G. III"/>
            <person name="Bloch C.A."/>
            <person name="Perna N.T."/>
            <person name="Burland V."/>
            <person name="Riley M."/>
            <person name="Collado-Vides J."/>
            <person name="Glasner J.D."/>
            <person name="Rode C.K."/>
            <person name="Mayhew G.F."/>
            <person name="Gregor J."/>
            <person name="Davis N.W."/>
            <person name="Kirkpatrick H.A."/>
            <person name="Goeden M.A."/>
            <person name="Rose D.J."/>
            <person name="Mau B."/>
            <person name="Shao Y."/>
        </authorList>
    </citation>
    <scope>NUCLEOTIDE SEQUENCE [LARGE SCALE GENOMIC DNA]</scope>
    <source>
        <strain>K12 / MG1655 / ATCC 47076</strain>
    </source>
</reference>
<reference key="4">
    <citation type="journal article" date="2006" name="Mol. Syst. Biol.">
        <title>Highly accurate genome sequences of Escherichia coli K-12 strains MG1655 and W3110.</title>
        <authorList>
            <person name="Hayashi K."/>
            <person name="Morooka N."/>
            <person name="Yamamoto Y."/>
            <person name="Fujita K."/>
            <person name="Isono K."/>
            <person name="Choi S."/>
            <person name="Ohtsubo E."/>
            <person name="Baba T."/>
            <person name="Wanner B.L."/>
            <person name="Mori H."/>
            <person name="Horiuchi T."/>
        </authorList>
    </citation>
    <scope>NUCLEOTIDE SEQUENCE [LARGE SCALE GENOMIC DNA]</scope>
    <source>
        <strain>K12 / W3110 / ATCC 27325 / DSM 5911</strain>
    </source>
</reference>
<reference key="5">
    <citation type="journal article" date="1991" name="J. Biol. Chem.">
        <title>Cloning, sequencing, and characterization of Escherichia coli thioesterase II.</title>
        <authorList>
            <person name="Naggert J."/>
            <person name="Narasimhan M.L."/>
            <person name="Deveaux L."/>
            <person name="Cho H."/>
            <person name="Randhawa Z.I."/>
            <person name="Cronan J.E. Jr."/>
            <person name="Green B.N."/>
            <person name="Smith S."/>
        </authorList>
    </citation>
    <scope>NUCLEOTIDE SEQUENCE [GENOMIC DNA] OF 377-428</scope>
    <source>
        <strain>K12</strain>
    </source>
</reference>
<reference key="6">
    <citation type="journal article" date="1994" name="Nucleic Acids Res.">
        <title>Intrinsic and extrinsic approaches for detecting genes in a bacterial genome.</title>
        <authorList>
            <person name="Borodovsky M."/>
            <person name="Rudd K.E."/>
            <person name="Koonin E.V."/>
        </authorList>
    </citation>
    <scope>IDENTIFICATION</scope>
</reference>
<reference key="7">
    <citation type="journal article" date="2000" name="Mol. Microbiol.">
        <title>Membrane topology of the Mep/Amt family of ammonium transporters.</title>
        <authorList>
            <person name="Thomas G.H."/>
            <person name="Mullins J.G."/>
            <person name="Merrick M."/>
        </authorList>
    </citation>
    <scope>TOPOLOGY</scope>
</reference>
<reference key="8">
    <citation type="journal article" date="2000" name="Trends Genet.">
        <title>The glnKamtB operon. A conserved gene pair in prokaryotes.</title>
        <authorList>
            <person name="Thomas G.H."/>
            <person name="Coutts G."/>
            <person name="Merrick M."/>
        </authorList>
    </citation>
    <scope>POSSIBLE INTERACTION WITH GLNK</scope>
</reference>
<reference key="9">
    <citation type="journal article" date="2002" name="Biochem. J.">
        <title>Purification of the Escherichia coli ammonium transporter AmtB reveals a trimeric stoichiometry.</title>
        <authorList>
            <person name="Blakey D."/>
            <person name="Leech A."/>
            <person name="Thomas G.H."/>
            <person name="Coutts G."/>
            <person name="Findlay K."/>
            <person name="Merrick M."/>
        </authorList>
    </citation>
    <scope>FUNCTION</scope>
    <scope>SUBUNIT</scope>
    <scope>SUBCELLULAR LOCATION</scope>
</reference>
<reference key="10">
    <citation type="journal article" date="2002" name="EMBO J.">
        <title>Membrane sequestration of the signal transduction protein GlnK by the ammonium transporter AmtB.</title>
        <authorList>
            <person name="Coutts G."/>
            <person name="Thomas G."/>
            <person name="Blakey D."/>
            <person name="Merrick M."/>
        </authorList>
    </citation>
    <scope>FUNCTION</scope>
    <scope>ACTIVITY REGULATION</scope>
    <scope>INTERACTION WITH GLNK</scope>
    <scope>SUBCELLULAR LOCATION</scope>
    <scope>DOMAIN</scope>
    <scope>MUTAGENESIS OF 404-GLY--ALA-428</scope>
</reference>
<reference key="11">
    <citation type="journal article" date="2004" name="J. Biol. Chem.">
        <title>Ammonium sensing in Escherichia coli. Role of the ammonium transporter AmtB and AmtB-GlnK complex formation.</title>
        <authorList>
            <person name="Javelle A."/>
            <person name="Severi E."/>
            <person name="Thornton J."/>
            <person name="Merrick M."/>
        </authorList>
    </citation>
    <scope>FUNCTION</scope>
    <scope>ACTIVITY REGULATION</scope>
    <scope>INTERACTION WITH GLNK</scope>
    <scope>MUTAGENESIS OF ASP-182</scope>
</reference>
<reference key="12">
    <citation type="journal article" date="2005" name="Biochem. J.">
        <title>In vivo functional characterization of the Escherichia coli ammonium channel AmtB: evidence for metabolic coupling of AmtB to glutamine synthetase.</title>
        <authorList>
            <person name="Javelle A."/>
            <person name="Thomas G."/>
            <person name="Marini A.M."/>
            <person name="Kraemer R."/>
            <person name="Merrick M."/>
        </authorList>
    </citation>
    <scope>FUNCTION</scope>
    <scope>ACTIVITY REGULATION</scope>
</reference>
<reference key="13">
    <citation type="journal article" date="2005" name="Science">
        <title>Global topology analysis of the Escherichia coli inner membrane proteome.</title>
        <authorList>
            <person name="Daley D.O."/>
            <person name="Rapp M."/>
            <person name="Granseth E."/>
            <person name="Melen K."/>
            <person name="Drew D."/>
            <person name="von Heijne G."/>
        </authorList>
    </citation>
    <scope>TOPOLOGY [LARGE SCALE ANALYSIS]</scope>
    <source>
        <strain>K12 / MG1655 / ATCC 47076</strain>
    </source>
</reference>
<reference key="14">
    <citation type="journal article" date="2006" name="J. Am. Chem. Soc.">
        <title>Molecular dynamics simulations on the Escherichia coli ammonia channel protein AmtB: mechanism of ammonia/ammonium transport.</title>
        <authorList>
            <person name="Lin Y."/>
            <person name="Cao Z."/>
            <person name="Mo Y."/>
        </authorList>
    </citation>
    <scope>FUNCTION</scope>
    <scope>MOLECULAR DYNAMICS SIMULATIONS</scope>
</reference>
<reference key="15">
    <citation type="journal article" date="2006" name="J. Biol. Chem.">
        <title>In vitro analysis of the Escherichia coli AmtB-GlnK complex reveals a stoichiometric interaction and sensitivity to ATP and 2-oxoglutarate.</title>
        <authorList>
            <person name="Durand A."/>
            <person name="Merrick M."/>
        </authorList>
    </citation>
    <scope>ACTIVITY REGULATION</scope>
    <scope>INTERACTION WITH GLNK</scope>
</reference>
<reference key="16">
    <citation type="journal article" date="2007" name="Mol. Membr. Biol.">
        <title>The conserved carboxy-terminal region of the ammonia channel AmtB plays a critical role in channel function.</title>
        <authorList>
            <person name="Severi E."/>
            <person name="Javelle A."/>
            <person name="Merrick M."/>
        </authorList>
    </citation>
    <scope>DOMAIN</scope>
    <scope>MUTAGENESIS OF 405-LEU--ALA-428; ARG-406; GLY-415; 421-HIS--ALA-428; 426-TYR--ALA-428; TYR-426; 427-ASN-ALA-428; ASN-427 AND ALA-428</scope>
</reference>
<reference key="17">
    <citation type="journal article" date="2007" name="Proc. Natl. Acad. Sci. U.S.A.">
        <title>The W148L substitution in the Escherichia coli ammonium channel AmtB increases flux and indicates that the substrate is an ion.</title>
        <authorList>
            <person name="Fong R.N."/>
            <person name="Kim K.S."/>
            <person name="Yoshihara C."/>
            <person name="Inwood W.B."/>
            <person name="Kustu S."/>
        </authorList>
    </citation>
    <scope>FUNCTION</scope>
    <scope>MUTAGENESIS OF TRP-170</scope>
</reference>
<reference key="18">
    <citation type="journal article" date="2009" name="J. Phys. Chem. B">
        <title>Functional role of Asp160 and the deprotonation mechanism of ammonium in the Escherichia coli ammonia channel protein AmtB.</title>
        <authorList>
            <person name="Lin Y."/>
            <person name="Cao Z."/>
            <person name="Mo Y."/>
        </authorList>
    </citation>
    <scope>FUNCTION</scope>
    <scope>DEPROTONATION MECHANISM</scope>
    <scope>MOLECULAR DYNAMICS SIMULATIONS ON WILD-TYPE AND ALA-182 MUTANT</scope>
</reference>
<reference key="19">
    <citation type="journal article" date="2010" name="J. Biol. Chem.">
        <title>Control of AmtB-GlnK complex formation by intracellular levels of ATP, ADP, and 2-oxoglutarate.</title>
        <authorList>
            <person name="Radchenko M.V."/>
            <person name="Thornton J."/>
            <person name="Merrick M."/>
        </authorList>
    </citation>
    <scope>ACTIVITY REGULATION</scope>
    <scope>INTERACTION WITH GLNK</scope>
</reference>
<reference key="20">
    <citation type="journal article" date="2013" name="PLoS ONE">
        <title>Ammonium transport proteins with changes in one of the conserved pore histidines have different performance in ammonia and methylamine conduction.</title>
        <authorList>
            <person name="Wang J."/>
            <person name="Fulford T."/>
            <person name="Shao Q."/>
            <person name="Javelle A."/>
            <person name="Yang H."/>
            <person name="Zhu W."/>
            <person name="Merrick M."/>
        </authorList>
    </citation>
    <scope>MUTAGENESIS OF HIS-190 AND HIS-340</scope>
</reference>
<reference key="21">
    <citation type="journal article" date="2014" name="Nature">
        <title>Membrane proteins bind lipids selectively to modulate their structure and function.</title>
        <authorList>
            <person name="Laganowsky A."/>
            <person name="Reading E."/>
            <person name="Allison T.M."/>
            <person name="Ulmschneider M.B."/>
            <person name="Degiacomi M.T."/>
            <person name="Baldwin A.J."/>
            <person name="Robinson C.V."/>
        </authorList>
    </citation>
    <scope>INTERACTION WITH LIPIDS</scope>
</reference>
<reference key="22">
    <citation type="journal article" date="2019" name="FASEB J.">
        <title>The lipid environment determines the activity of the Escherichia coli ammonium transporter AmtB.</title>
        <authorList>
            <person name="Mirandela G.D."/>
            <person name="Tamburrino G."/>
            <person name="Hoskisson P.A."/>
            <person name="Zachariae U."/>
            <person name="Javelle A."/>
        </authorList>
    </citation>
    <scope>FUNCTION</scope>
    <scope>INTERACTION WITH LIPIDS</scope>
</reference>
<reference key="23">
    <citation type="journal article" date="2020" name="Elife">
        <title>A two-lane mechanism for selective biological ammonium transport.</title>
        <authorList>
            <person name="Williamson G."/>
            <person name="Tamburrino G."/>
            <person name="Bizior A."/>
            <person name="Boeckstaens M."/>
            <person name="Dias Mirandela G."/>
            <person name="Bage M.G."/>
            <person name="Pisliakov A."/>
            <person name="Ives C.M."/>
            <person name="Terras E."/>
            <person name="Hoskisson P.A."/>
            <person name="Marini A.M."/>
            <person name="Zachariae U."/>
            <person name="Javelle A."/>
        </authorList>
    </citation>
    <scope>FUNCTION</scope>
    <scope>TRANSPORT MECHANISM</scope>
    <scope>MUTAGENESIS OF ASP-182; HIS-190 AND HIS-340</scope>
</reference>
<reference evidence="39 40" key="24">
    <citation type="journal article" date="2004" name="Proc. Natl. Acad. Sci. U.S.A.">
        <title>The mechanism of ammonia transport based on the crystal structure of AmtB of Escherichia coli.</title>
        <authorList>
            <person name="Zheng L."/>
            <person name="Kostrewa D."/>
            <person name="Berneche S."/>
            <person name="Winkler F.K."/>
            <person name="Li X.-D."/>
        </authorList>
    </citation>
    <scope>X-RAY CRYSTALLOGRAPHY (1.80 ANGSTROMS) OF 23-428</scope>
    <scope>FUNCTION</scope>
    <scope>SUBUNIT</scope>
    <scope>SUBCELLULAR LOCATION</scope>
    <scope>TOPOLOGY</scope>
</reference>
<reference evidence="36 37 38" key="25">
    <citation type="journal article" date="2004" name="Science">
        <title>Mechanism of ammonia transport by Amt/MEP/Rh: structure of AmtB at 1.35 A.</title>
        <authorList>
            <person name="Khademi S."/>
            <person name="O'Connell J.D. III"/>
            <person name="Remis J."/>
            <person name="Robles-Colmenares Y."/>
            <person name="Miercke L.J."/>
            <person name="Stroud R.M."/>
        </authorList>
    </citation>
    <scope>X-RAY CRYSTALLOGRAPHY (1.35 ANGSTROMS) OF 23-407 IN COMPLEXES WITH AMMONIA; AMMONIUM AND METHYLAMINE</scope>
    <scope>PROTEIN SEQUENCE OF N-TERMINUS</scope>
    <scope>FUNCTION</scope>
    <scope>SUBUNIT</scope>
    <scope>SUBCELLULAR LOCATION</scope>
    <scope>TOPOLOGY</scope>
</reference>
<reference evidence="41 42 43 44 45 46 47 48 49" key="26">
    <citation type="journal article" date="2006" name="J. Biol. Chem.">
        <title>An unusual twin-his arrangement in the pore of ammonia channels is essential for substrate conductance.</title>
        <authorList>
            <person name="Javelle A."/>
            <person name="Lupo D."/>
            <person name="Zheng L."/>
            <person name="Li X.D."/>
            <person name="Winkler F.K."/>
            <person name="Merrick M."/>
        </authorList>
    </citation>
    <scope>X-RAY CRYSTALLOGRAPHY (2.00 ANGSTROMS) OF 23-428 OF WILD-TYPE AND HISTIDINE MUTANTS</scope>
    <scope>SUBUNIT</scope>
    <scope>SUBCELLULAR LOCATION</scope>
    <scope>TOPOLOGY</scope>
    <scope>MUTAGENESIS OF HIS-190 AND HIS-340</scope>
</reference>
<reference evidence="51" key="27">
    <citation type="journal article" date="2007" name="Proc. Natl. Acad. Sci. U.S.A.">
        <title>The crystal structure of the Escherichia coli AmtB-GlnK complex reveals how GlnK regulates the ammonia channel.</title>
        <authorList>
            <person name="Conroy M.J."/>
            <person name="Durand A."/>
            <person name="Lupo D."/>
            <person name="Li X.D."/>
            <person name="Bullough P.A."/>
            <person name="Winkler F.K."/>
            <person name="Merrick M."/>
        </authorList>
    </citation>
    <scope>X-RAY CRYSTALLOGRAPHY (2.50 ANGSTROMS) OF 25-428 IN COMPLEX WITH GLNK</scope>
    <scope>SUBUNIT</scope>
    <scope>INTERACTION WITH GLNK</scope>
</reference>
<reference evidence="50" key="28">
    <citation type="journal article" date="2007" name="Proc. Natl. Acad. Sci. U.S.A.">
        <title>Inhibitory complex of the transmembrane ammonia channel, AmtB, and the cytosolic regulatory protein, GlnK, at 1.96 A.</title>
        <authorList>
            <person name="Gruswitz F."/>
            <person name="O'Connell J. III"/>
            <person name="Stroud R.M."/>
        </authorList>
    </citation>
    <scope>X-RAY CRYSTALLOGRAPHY (1.96 ANGSTROMS) OF 23-428 IN COMPLEX WITH GLNK</scope>
    <scope>INTERACTION WITH GLNK</scope>
    <scope>DOMAIN</scope>
</reference>
<reference evidence="52 53 54 55" key="29">
    <citation type="journal article" date="2008" name="Proc. Natl. Acad. Sci. U.S.A.">
        <title>Substrate binding, deprotonation, and selectivity at the periplasmic entrance of the Escherichia coli ammonia channel AmtB.</title>
        <authorList>
            <person name="Javelle A."/>
            <person name="Lupo D."/>
            <person name="Ripoche P."/>
            <person name="Fulford T."/>
            <person name="Merrick M."/>
            <person name="Winkler F.K."/>
        </authorList>
    </citation>
    <scope>X-RAY CRYSTALLOGRAPHY (2.00 ANGSTROMS) OF 23-428 OF WILD-TYPE AND MUTANTS PHE-129; PHE-237 AND PHE-129/PHE-237</scope>
    <scope>FUNCTION</scope>
    <scope>ACTIVITY REGULATION</scope>
    <scope>MUTAGENESIS OF PHE-129; TRP-170; TRP-234; PHE-237 AND SER-241</scope>
</reference>
<reference evidence="56" key="30">
    <citation type="journal article" date="2018" name="Proc. Natl. Acad. Sci. U.S.A.">
        <title>Allostery revealed within lipid binding events to membrane proteins.</title>
        <authorList>
            <person name="Patrick J.W."/>
            <person name="Boone C.D."/>
            <person name="Liu W."/>
            <person name="Conover G.M."/>
            <person name="Liu Y."/>
            <person name="Cong X."/>
            <person name="Laganowsky A."/>
        </authorList>
    </citation>
    <scope>X-RAY CRYSTALLOGRAPHY (2.45 ANGSTROMS) OF 26-428 IN COMPLEX WITH CARDIOLIPIN</scope>
    <scope>INTERACTION WITH LIPIDS</scope>
    <scope>MUTAGENESIS OF HIS-178</scope>
</reference>
<proteinExistence type="evidence at protein level"/>